<feature type="chain" id="PRO_0000139573" description="Light-independent protochlorophyllide reductase iron-sulfur ATP-binding protein">
    <location>
        <begin position="1"/>
        <end position="286"/>
    </location>
</feature>
<feature type="binding site" evidence="1">
    <location>
        <begin position="10"/>
        <end position="15"/>
    </location>
    <ligand>
        <name>ATP</name>
        <dbReference type="ChEBI" id="CHEBI:30616"/>
    </ligand>
</feature>
<feature type="binding site" evidence="1">
    <location>
        <position position="14"/>
    </location>
    <ligand>
        <name>Mg(2+)</name>
        <dbReference type="ChEBI" id="CHEBI:18420"/>
    </ligand>
</feature>
<feature type="binding site" evidence="1">
    <location>
        <position position="39"/>
    </location>
    <ligand>
        <name>ATP</name>
        <dbReference type="ChEBI" id="CHEBI:30616"/>
    </ligand>
</feature>
<feature type="binding site" evidence="1">
    <location>
        <position position="95"/>
    </location>
    <ligand>
        <name>[4Fe-4S] cluster</name>
        <dbReference type="ChEBI" id="CHEBI:49883"/>
        <note>ligand shared between dimeric partners</note>
    </ligand>
</feature>
<feature type="binding site" evidence="1">
    <location>
        <position position="129"/>
    </location>
    <ligand>
        <name>[4Fe-4S] cluster</name>
        <dbReference type="ChEBI" id="CHEBI:49883"/>
        <note>ligand shared between dimeric partners</note>
    </ligand>
</feature>
<feature type="binding site" evidence="1">
    <location>
        <begin position="180"/>
        <end position="181"/>
    </location>
    <ligand>
        <name>ATP</name>
        <dbReference type="ChEBI" id="CHEBI:30616"/>
    </ligand>
</feature>
<accession>P54207</accession>
<accession>Q31NC0</accession>
<protein>
    <recommendedName>
        <fullName evidence="1">Light-independent protochlorophyllide reductase iron-sulfur ATP-binding protein</fullName>
        <shortName evidence="1">DPOR subunit L</shortName>
        <shortName evidence="1">LI-POR subunit L</shortName>
        <ecNumber evidence="1">1.3.7.7</ecNumber>
    </recommendedName>
</protein>
<name>CHLL_SYNE7</name>
<proteinExistence type="inferred from homology"/>
<evidence type="ECO:0000255" key="1">
    <source>
        <dbReference type="HAMAP-Rule" id="MF_00355"/>
    </source>
</evidence>
<comment type="function">
    <text evidence="1">Component of the dark-operative protochlorophyllide reductase (DPOR) that uses Mg-ATP and reduced ferredoxin to reduce ring D of protochlorophyllide (Pchlide) to form chlorophyllide a (Chlide). This reaction is light-independent. The L component serves as a unique electron donor to the NB-component of the complex, and binds Mg-ATP.</text>
</comment>
<comment type="catalytic activity">
    <reaction evidence="1">
        <text>chlorophyllide a + oxidized 2[4Fe-4S]-[ferredoxin] + 2 ADP + 2 phosphate = protochlorophyllide a + reduced 2[4Fe-4S]-[ferredoxin] + 2 ATP + 2 H2O</text>
        <dbReference type="Rhea" id="RHEA:28202"/>
        <dbReference type="Rhea" id="RHEA-COMP:10002"/>
        <dbReference type="Rhea" id="RHEA-COMP:10004"/>
        <dbReference type="ChEBI" id="CHEBI:15377"/>
        <dbReference type="ChEBI" id="CHEBI:30616"/>
        <dbReference type="ChEBI" id="CHEBI:33722"/>
        <dbReference type="ChEBI" id="CHEBI:33723"/>
        <dbReference type="ChEBI" id="CHEBI:43474"/>
        <dbReference type="ChEBI" id="CHEBI:83348"/>
        <dbReference type="ChEBI" id="CHEBI:83350"/>
        <dbReference type="ChEBI" id="CHEBI:456216"/>
        <dbReference type="EC" id="1.3.7.7"/>
    </reaction>
</comment>
<comment type="cofactor">
    <cofactor evidence="1">
        <name>[4Fe-4S] cluster</name>
        <dbReference type="ChEBI" id="CHEBI:49883"/>
    </cofactor>
    <text evidence="1">Binds 1 [4Fe-4S] cluster per dimer.</text>
</comment>
<comment type="pathway">
    <text evidence="1">Porphyrin-containing compound metabolism; chlorophyll biosynthesis (light-independent).</text>
</comment>
<comment type="subunit">
    <text evidence="1">Homodimer. Protochlorophyllide reductase is composed of three subunits; ChlL, ChlN and ChlB.</text>
</comment>
<comment type="similarity">
    <text evidence="1">Belongs to the NifH/BchL/ChlL family.</text>
</comment>
<dbReference type="EC" id="1.3.7.7" evidence="1"/>
<dbReference type="EMBL" id="X67694">
    <property type="protein sequence ID" value="CAA47923.1"/>
    <property type="molecule type" value="Genomic_DNA"/>
</dbReference>
<dbReference type="EMBL" id="CP000100">
    <property type="protein sequence ID" value="ABB57449.1"/>
    <property type="molecule type" value="Genomic_DNA"/>
</dbReference>
<dbReference type="PIR" id="S25620">
    <property type="entry name" value="S25620"/>
</dbReference>
<dbReference type="SMR" id="P54207"/>
<dbReference type="STRING" id="1140.Synpcc7942_1419"/>
<dbReference type="PaxDb" id="1140-Synpcc7942_1419"/>
<dbReference type="KEGG" id="syf:Synpcc7942_1419"/>
<dbReference type="eggNOG" id="COG1348">
    <property type="taxonomic scope" value="Bacteria"/>
</dbReference>
<dbReference type="HOGENOM" id="CLU_059373_2_0_3"/>
<dbReference type="OrthoDB" id="9778641at2"/>
<dbReference type="BioCyc" id="SYNEL:SYNPCC7942_1419-MONOMER"/>
<dbReference type="UniPathway" id="UPA00670"/>
<dbReference type="Proteomes" id="UP000889800">
    <property type="component" value="Chromosome"/>
</dbReference>
<dbReference type="GO" id="GO:0051539">
    <property type="term" value="F:4 iron, 4 sulfur cluster binding"/>
    <property type="evidence" value="ECO:0007669"/>
    <property type="project" value="UniProtKB-UniRule"/>
</dbReference>
<dbReference type="GO" id="GO:0005524">
    <property type="term" value="F:ATP binding"/>
    <property type="evidence" value="ECO:0007669"/>
    <property type="project" value="UniProtKB-UniRule"/>
</dbReference>
<dbReference type="GO" id="GO:0046872">
    <property type="term" value="F:metal ion binding"/>
    <property type="evidence" value="ECO:0007669"/>
    <property type="project" value="UniProtKB-KW"/>
</dbReference>
<dbReference type="GO" id="GO:0016730">
    <property type="term" value="F:oxidoreductase activity, acting on iron-sulfur proteins as donors"/>
    <property type="evidence" value="ECO:0007669"/>
    <property type="project" value="InterPro"/>
</dbReference>
<dbReference type="GO" id="GO:0016636">
    <property type="term" value="F:oxidoreductase activity, acting on the CH-CH group of donors, iron-sulfur protein as acceptor"/>
    <property type="evidence" value="ECO:0007669"/>
    <property type="project" value="UniProtKB-UniRule"/>
</dbReference>
<dbReference type="GO" id="GO:0036068">
    <property type="term" value="P:light-independent chlorophyll biosynthetic process"/>
    <property type="evidence" value="ECO:0007669"/>
    <property type="project" value="UniProtKB-UniRule"/>
</dbReference>
<dbReference type="GO" id="GO:0019685">
    <property type="term" value="P:photosynthesis, dark reaction"/>
    <property type="evidence" value="ECO:0007669"/>
    <property type="project" value="InterPro"/>
</dbReference>
<dbReference type="CDD" id="cd02032">
    <property type="entry name" value="Bchl-like"/>
    <property type="match status" value="1"/>
</dbReference>
<dbReference type="Gene3D" id="3.40.50.300">
    <property type="entry name" value="P-loop containing nucleotide triphosphate hydrolases"/>
    <property type="match status" value="1"/>
</dbReference>
<dbReference type="HAMAP" id="MF_00355">
    <property type="entry name" value="ChlL_BchL"/>
    <property type="match status" value="1"/>
</dbReference>
<dbReference type="InterPro" id="IPR030655">
    <property type="entry name" value="NifH/chlL_CS"/>
</dbReference>
<dbReference type="InterPro" id="IPR000392">
    <property type="entry name" value="NifH/frxC"/>
</dbReference>
<dbReference type="InterPro" id="IPR027417">
    <property type="entry name" value="P-loop_NTPase"/>
</dbReference>
<dbReference type="InterPro" id="IPR005971">
    <property type="entry name" value="Protochlorophyllide_ATP-bd"/>
</dbReference>
<dbReference type="NCBIfam" id="TIGR01281">
    <property type="entry name" value="DPOR_bchL"/>
    <property type="match status" value="1"/>
</dbReference>
<dbReference type="PANTHER" id="PTHR42864">
    <property type="entry name" value="LIGHT-INDEPENDENT PROTOCHLOROPHYLLIDE REDUCTASE IRON-SULFUR ATP-BINDING PROTEIN"/>
    <property type="match status" value="1"/>
</dbReference>
<dbReference type="PANTHER" id="PTHR42864:SF2">
    <property type="entry name" value="LIGHT-INDEPENDENT PROTOCHLOROPHYLLIDE REDUCTASE IRON-SULFUR ATP-BINDING PROTEIN"/>
    <property type="match status" value="1"/>
</dbReference>
<dbReference type="Pfam" id="PF00142">
    <property type="entry name" value="Fer4_NifH"/>
    <property type="match status" value="1"/>
</dbReference>
<dbReference type="PIRSF" id="PIRSF000363">
    <property type="entry name" value="Nitrogenase_iron"/>
    <property type="match status" value="1"/>
</dbReference>
<dbReference type="PRINTS" id="PR00091">
    <property type="entry name" value="NITROGNASEII"/>
</dbReference>
<dbReference type="SUPFAM" id="SSF52540">
    <property type="entry name" value="P-loop containing nucleoside triphosphate hydrolases"/>
    <property type="match status" value="1"/>
</dbReference>
<dbReference type="PROSITE" id="PS00746">
    <property type="entry name" value="NIFH_FRXC_1"/>
    <property type="match status" value="1"/>
</dbReference>
<dbReference type="PROSITE" id="PS00692">
    <property type="entry name" value="NIFH_FRXC_2"/>
    <property type="match status" value="1"/>
</dbReference>
<dbReference type="PROSITE" id="PS51026">
    <property type="entry name" value="NIFH_FRXC_3"/>
    <property type="match status" value="1"/>
</dbReference>
<sequence>MKLSVYGKGGIGKSTTSCNISVALARRGKKVLQIGCDPKHDSTFTLTGFLIPTIIDTLQAKDYHYEDVWPEDVIYRGYGGVDCVEAGGPPAGAGCGGYVVGETVKLLKELNAFDEYDVILFDVLGDVVCGGFAAPLNYSDYCLIITDNGFDALFAANRIAASVREKARTHTLRLAGLIGNRTSKRDLIDKYIEAVPMPVLEVLPLIEDIRISRVKGKTVFEMAETEPSLLTVCDYYLNIADQILARPEGVVPKDAADRDLFSLLSDFYLNPPKQTTEAIAPEALLV</sequence>
<reference key="1">
    <citation type="journal article" date="1995" name="Plant Physiol.">
        <title>The genomic region of rbcLS in Synechococcus sp. PCC 7942 contains genes involved in the ability to grow under low CO2 concentration and in chlorophyll biosynthesis.</title>
        <authorList>
            <person name="Ronen-Tarazi M."/>
            <person name="Lieman-Hurwitz J."/>
            <person name="Gabay C."/>
            <person name="Orus M.I."/>
            <person name="Kaplan A."/>
        </authorList>
    </citation>
    <scope>NUCLEOTIDE SEQUENCE [GENOMIC DNA]</scope>
</reference>
<reference key="2">
    <citation type="submission" date="2005-08" db="EMBL/GenBank/DDBJ databases">
        <title>Complete sequence of chromosome 1 of Synechococcus elongatus PCC 7942.</title>
        <authorList>
            <consortium name="US DOE Joint Genome Institute"/>
            <person name="Copeland A."/>
            <person name="Lucas S."/>
            <person name="Lapidus A."/>
            <person name="Barry K."/>
            <person name="Detter J.C."/>
            <person name="Glavina T."/>
            <person name="Hammon N."/>
            <person name="Israni S."/>
            <person name="Pitluck S."/>
            <person name="Schmutz J."/>
            <person name="Larimer F."/>
            <person name="Land M."/>
            <person name="Kyrpides N."/>
            <person name="Lykidis A."/>
            <person name="Golden S."/>
            <person name="Richardson P."/>
        </authorList>
    </citation>
    <scope>NUCLEOTIDE SEQUENCE [LARGE SCALE GENOMIC DNA]</scope>
    <source>
        <strain>ATCC 33912 / PCC 7942 / FACHB-805</strain>
    </source>
</reference>
<keyword id="KW-0004">4Fe-4S</keyword>
<keyword id="KW-0067">ATP-binding</keyword>
<keyword id="KW-0149">Chlorophyll biosynthesis</keyword>
<keyword id="KW-0408">Iron</keyword>
<keyword id="KW-0411">Iron-sulfur</keyword>
<keyword id="KW-0460">Magnesium</keyword>
<keyword id="KW-0479">Metal-binding</keyword>
<keyword id="KW-0547">Nucleotide-binding</keyword>
<keyword id="KW-0560">Oxidoreductase</keyword>
<keyword id="KW-0602">Photosynthesis</keyword>
<keyword id="KW-1185">Reference proteome</keyword>
<organism>
    <name type="scientific">Synechococcus elongatus (strain ATCC 33912 / PCC 7942 / FACHB-805)</name>
    <name type="common">Anacystis nidulans R2</name>
    <dbReference type="NCBI Taxonomy" id="1140"/>
    <lineage>
        <taxon>Bacteria</taxon>
        <taxon>Bacillati</taxon>
        <taxon>Cyanobacteriota</taxon>
        <taxon>Cyanophyceae</taxon>
        <taxon>Synechococcales</taxon>
        <taxon>Synechococcaceae</taxon>
        <taxon>Synechococcus</taxon>
    </lineage>
</organism>
<gene>
    <name evidence="1" type="primary">chlL</name>
    <name type="synonym">frxC</name>
    <name type="ordered locus">Synpcc7942_1419</name>
</gene>